<accession>Q0AQT4</accession>
<name>QUEF_MARMM</name>
<proteinExistence type="inferred from homology"/>
<keyword id="KW-0963">Cytoplasm</keyword>
<keyword id="KW-0521">NADP</keyword>
<keyword id="KW-0560">Oxidoreductase</keyword>
<keyword id="KW-0671">Queuosine biosynthesis</keyword>
<keyword id="KW-1185">Reference proteome</keyword>
<gene>
    <name evidence="1" type="primary">queF</name>
    <name type="ordered locus">Mmar10_1060</name>
</gene>
<protein>
    <recommendedName>
        <fullName evidence="1">NADPH-dependent 7-cyano-7-deazaguanine reductase</fullName>
        <ecNumber evidence="1">1.7.1.13</ecNumber>
    </recommendedName>
    <alternativeName>
        <fullName evidence="1">7-cyano-7-carbaguanine reductase</fullName>
    </alternativeName>
    <alternativeName>
        <fullName evidence="1">NADPH-dependent nitrile oxidoreductase</fullName>
    </alternativeName>
    <alternativeName>
        <fullName evidence="1">PreQ(0) reductase</fullName>
    </alternativeName>
</protein>
<comment type="function">
    <text evidence="1">Catalyzes the NADPH-dependent reduction of 7-cyano-7-deazaguanine (preQ0) to 7-aminomethyl-7-deazaguanine (preQ1).</text>
</comment>
<comment type="catalytic activity">
    <reaction evidence="1">
        <text>7-aminomethyl-7-carbaguanine + 2 NADP(+) = 7-cyano-7-deazaguanine + 2 NADPH + 3 H(+)</text>
        <dbReference type="Rhea" id="RHEA:13409"/>
        <dbReference type="ChEBI" id="CHEBI:15378"/>
        <dbReference type="ChEBI" id="CHEBI:45075"/>
        <dbReference type="ChEBI" id="CHEBI:57783"/>
        <dbReference type="ChEBI" id="CHEBI:58349"/>
        <dbReference type="ChEBI" id="CHEBI:58703"/>
        <dbReference type="EC" id="1.7.1.13"/>
    </reaction>
</comment>
<comment type="pathway">
    <text evidence="1">tRNA modification; tRNA-queuosine biosynthesis.</text>
</comment>
<comment type="subcellular location">
    <subcellularLocation>
        <location evidence="1">Cytoplasm</location>
    </subcellularLocation>
</comment>
<comment type="similarity">
    <text evidence="1">Belongs to the GTP cyclohydrolase I family. QueF type 1 subfamily.</text>
</comment>
<feature type="chain" id="PRO_1000062392" description="NADPH-dependent 7-cyano-7-deazaguanine reductase">
    <location>
        <begin position="1"/>
        <end position="153"/>
    </location>
</feature>
<feature type="region of interest" description="Disordered" evidence="2">
    <location>
        <begin position="1"/>
        <end position="22"/>
    </location>
</feature>
<feature type="active site" description="Thioimide intermediate" evidence="1">
    <location>
        <position position="51"/>
    </location>
</feature>
<feature type="active site" description="Proton donor" evidence="1">
    <location>
        <position position="58"/>
    </location>
</feature>
<feature type="binding site" evidence="1">
    <location>
        <begin position="73"/>
        <end position="75"/>
    </location>
    <ligand>
        <name>substrate</name>
    </ligand>
</feature>
<feature type="binding site" evidence="1">
    <location>
        <begin position="92"/>
        <end position="93"/>
    </location>
    <ligand>
        <name>substrate</name>
    </ligand>
</feature>
<dbReference type="EC" id="1.7.1.13" evidence="1"/>
<dbReference type="EMBL" id="CP000449">
    <property type="protein sequence ID" value="ABI65353.1"/>
    <property type="molecule type" value="Genomic_DNA"/>
</dbReference>
<dbReference type="RefSeq" id="WP_011643000.1">
    <property type="nucleotide sequence ID" value="NC_008347.1"/>
</dbReference>
<dbReference type="SMR" id="Q0AQT4"/>
<dbReference type="STRING" id="394221.Mmar10_1060"/>
<dbReference type="KEGG" id="mmr:Mmar10_1060"/>
<dbReference type="eggNOG" id="COG0780">
    <property type="taxonomic scope" value="Bacteria"/>
</dbReference>
<dbReference type="HOGENOM" id="CLU_102489_0_1_5"/>
<dbReference type="OrthoDB" id="9789995at2"/>
<dbReference type="UniPathway" id="UPA00392"/>
<dbReference type="Proteomes" id="UP000001964">
    <property type="component" value="Chromosome"/>
</dbReference>
<dbReference type="GO" id="GO:0005737">
    <property type="term" value="C:cytoplasm"/>
    <property type="evidence" value="ECO:0007669"/>
    <property type="project" value="UniProtKB-SubCell"/>
</dbReference>
<dbReference type="GO" id="GO:0033739">
    <property type="term" value="F:preQ1 synthase activity"/>
    <property type="evidence" value="ECO:0007669"/>
    <property type="project" value="UniProtKB-UniRule"/>
</dbReference>
<dbReference type="GO" id="GO:0008616">
    <property type="term" value="P:queuosine biosynthetic process"/>
    <property type="evidence" value="ECO:0007669"/>
    <property type="project" value="UniProtKB-UniRule"/>
</dbReference>
<dbReference type="GO" id="GO:0006400">
    <property type="term" value="P:tRNA modification"/>
    <property type="evidence" value="ECO:0007669"/>
    <property type="project" value="UniProtKB-UniRule"/>
</dbReference>
<dbReference type="Gene3D" id="3.30.1130.10">
    <property type="match status" value="1"/>
</dbReference>
<dbReference type="HAMAP" id="MF_00818">
    <property type="entry name" value="QueF_type1"/>
    <property type="match status" value="1"/>
</dbReference>
<dbReference type="InterPro" id="IPR043133">
    <property type="entry name" value="GTP-CH-I_C/QueF"/>
</dbReference>
<dbReference type="InterPro" id="IPR050084">
    <property type="entry name" value="NADPH_dep_7-cyano-7-deazaG_red"/>
</dbReference>
<dbReference type="InterPro" id="IPR029500">
    <property type="entry name" value="QueF"/>
</dbReference>
<dbReference type="InterPro" id="IPR016856">
    <property type="entry name" value="QueF_type1"/>
</dbReference>
<dbReference type="NCBIfam" id="TIGR03139">
    <property type="entry name" value="QueF-II"/>
    <property type="match status" value="1"/>
</dbReference>
<dbReference type="PANTHER" id="PTHR34354">
    <property type="entry name" value="NADPH-DEPENDENT 7-CYANO-7-DEAZAGUANINE REDUCTASE"/>
    <property type="match status" value="1"/>
</dbReference>
<dbReference type="PANTHER" id="PTHR34354:SF1">
    <property type="entry name" value="NADPH-DEPENDENT 7-CYANO-7-DEAZAGUANINE REDUCTASE"/>
    <property type="match status" value="1"/>
</dbReference>
<dbReference type="Pfam" id="PF14489">
    <property type="entry name" value="QueF"/>
    <property type="match status" value="1"/>
</dbReference>
<dbReference type="SUPFAM" id="SSF55620">
    <property type="entry name" value="Tetrahydrobiopterin biosynthesis enzymes-like"/>
    <property type="match status" value="1"/>
</dbReference>
<sequence length="153" mass="17000">MTDNRYDNLGQLGTSTPLPDNPDTAALERVANPCDAPYMTRFVCPEFTSLCPVTGAPDFAHLVIDYVPRDWIVESKSLKLYLGSFRNHGAFHEACTTGIGQRLVKELDPVWLRIGGYWYPRGGIPIDVFFATGEPPKGVWIPDQDVPGYRGRG</sequence>
<evidence type="ECO:0000255" key="1">
    <source>
        <dbReference type="HAMAP-Rule" id="MF_00818"/>
    </source>
</evidence>
<evidence type="ECO:0000256" key="2">
    <source>
        <dbReference type="SAM" id="MobiDB-lite"/>
    </source>
</evidence>
<organism>
    <name type="scientific">Maricaulis maris (strain MCS10)</name>
    <name type="common">Caulobacter maris</name>
    <dbReference type="NCBI Taxonomy" id="394221"/>
    <lineage>
        <taxon>Bacteria</taxon>
        <taxon>Pseudomonadati</taxon>
        <taxon>Pseudomonadota</taxon>
        <taxon>Alphaproteobacteria</taxon>
        <taxon>Maricaulales</taxon>
        <taxon>Maricaulaceae</taxon>
        <taxon>Maricaulis</taxon>
    </lineage>
</organism>
<reference key="1">
    <citation type="submission" date="2006-08" db="EMBL/GenBank/DDBJ databases">
        <title>Complete sequence of Maricaulis maris MCS10.</title>
        <authorList>
            <consortium name="US DOE Joint Genome Institute"/>
            <person name="Copeland A."/>
            <person name="Lucas S."/>
            <person name="Lapidus A."/>
            <person name="Barry K."/>
            <person name="Detter J.C."/>
            <person name="Glavina del Rio T."/>
            <person name="Hammon N."/>
            <person name="Israni S."/>
            <person name="Dalin E."/>
            <person name="Tice H."/>
            <person name="Pitluck S."/>
            <person name="Saunders E."/>
            <person name="Brettin T."/>
            <person name="Bruce D."/>
            <person name="Han C."/>
            <person name="Tapia R."/>
            <person name="Gilna P."/>
            <person name="Schmutz J."/>
            <person name="Larimer F."/>
            <person name="Land M."/>
            <person name="Hauser L."/>
            <person name="Kyrpides N."/>
            <person name="Mikhailova N."/>
            <person name="Viollier P."/>
            <person name="Stephens C."/>
            <person name="Richardson P."/>
        </authorList>
    </citation>
    <scope>NUCLEOTIDE SEQUENCE [LARGE SCALE GENOMIC DNA]</scope>
    <source>
        <strain>MCS10</strain>
    </source>
</reference>